<feature type="chain" id="PRO_0000213406" description="UDP-galactose transporter homolog 1">
    <location>
        <begin position="1"/>
        <end position="362"/>
    </location>
</feature>
<feature type="transmembrane region" description="Helical" evidence="2">
    <location>
        <begin position="7"/>
        <end position="27"/>
    </location>
</feature>
<feature type="transmembrane region" description="Helical" evidence="2">
    <location>
        <begin position="45"/>
        <end position="65"/>
    </location>
</feature>
<feature type="transmembrane region" description="Helical" evidence="2">
    <location>
        <begin position="111"/>
        <end position="131"/>
    </location>
</feature>
<feature type="transmembrane region" description="Helical" evidence="2">
    <location>
        <begin position="141"/>
        <end position="161"/>
    </location>
</feature>
<feature type="transmembrane region" description="Helical" evidence="2">
    <location>
        <begin position="175"/>
        <end position="195"/>
    </location>
</feature>
<feature type="transmembrane region" description="Helical" evidence="2">
    <location>
        <begin position="234"/>
        <end position="254"/>
    </location>
</feature>
<feature type="transmembrane region" description="Helical" evidence="2">
    <location>
        <begin position="271"/>
        <end position="291"/>
    </location>
</feature>
<feature type="transmembrane region" description="Helical" evidence="2">
    <location>
        <begin position="296"/>
        <end position="316"/>
    </location>
</feature>
<feature type="transmembrane region" description="Helical" evidence="2">
    <location>
        <begin position="317"/>
        <end position="337"/>
    </location>
</feature>
<feature type="glycosylation site" description="N-linked (GlcNAc...) asparagine" evidence="2">
    <location>
        <position position="196"/>
    </location>
</feature>
<reference key="1">
    <citation type="journal article" date="2004" name="Nature">
        <title>Genome evolution in yeasts.</title>
        <authorList>
            <person name="Dujon B."/>
            <person name="Sherman D."/>
            <person name="Fischer G."/>
            <person name="Durrens P."/>
            <person name="Casaregola S."/>
            <person name="Lafontaine I."/>
            <person name="de Montigny J."/>
            <person name="Marck C."/>
            <person name="Neuveglise C."/>
            <person name="Talla E."/>
            <person name="Goffard N."/>
            <person name="Frangeul L."/>
            <person name="Aigle M."/>
            <person name="Anthouard V."/>
            <person name="Babour A."/>
            <person name="Barbe V."/>
            <person name="Barnay S."/>
            <person name="Blanchin S."/>
            <person name="Beckerich J.-M."/>
            <person name="Beyne E."/>
            <person name="Bleykasten C."/>
            <person name="Boisrame A."/>
            <person name="Boyer J."/>
            <person name="Cattolico L."/>
            <person name="Confanioleri F."/>
            <person name="de Daruvar A."/>
            <person name="Despons L."/>
            <person name="Fabre E."/>
            <person name="Fairhead C."/>
            <person name="Ferry-Dumazet H."/>
            <person name="Groppi A."/>
            <person name="Hantraye F."/>
            <person name="Hennequin C."/>
            <person name="Jauniaux N."/>
            <person name="Joyet P."/>
            <person name="Kachouri R."/>
            <person name="Kerrest A."/>
            <person name="Koszul R."/>
            <person name="Lemaire M."/>
            <person name="Lesur I."/>
            <person name="Ma L."/>
            <person name="Muller H."/>
            <person name="Nicaud J.-M."/>
            <person name="Nikolski M."/>
            <person name="Oztas S."/>
            <person name="Ozier-Kalogeropoulos O."/>
            <person name="Pellenz S."/>
            <person name="Potier S."/>
            <person name="Richard G.-F."/>
            <person name="Straub M.-L."/>
            <person name="Suleau A."/>
            <person name="Swennen D."/>
            <person name="Tekaia F."/>
            <person name="Wesolowski-Louvel M."/>
            <person name="Westhof E."/>
            <person name="Wirth B."/>
            <person name="Zeniou-Meyer M."/>
            <person name="Zivanovic Y."/>
            <person name="Bolotin-Fukuhara M."/>
            <person name="Thierry A."/>
            <person name="Bouchier C."/>
            <person name="Caudron B."/>
            <person name="Scarpelli C."/>
            <person name="Gaillardin C."/>
            <person name="Weissenbach J."/>
            <person name="Wincker P."/>
            <person name="Souciet J.-L."/>
        </authorList>
    </citation>
    <scope>NUCLEOTIDE SEQUENCE [LARGE SCALE GENOMIC DNA]</scope>
    <source>
        <strain>ATCC 2001 / BCRC 20586 / JCM 3761 / NBRC 0622 / NRRL Y-65 / CBS 138</strain>
    </source>
</reference>
<proteinExistence type="inferred from homology"/>
<evidence type="ECO:0000250" key="1"/>
<evidence type="ECO:0000255" key="2"/>
<evidence type="ECO:0000305" key="3"/>
<dbReference type="EMBL" id="CR380954">
    <property type="protein sequence ID" value="CAG59767.1"/>
    <property type="molecule type" value="Genomic_DNA"/>
</dbReference>
<dbReference type="RefSeq" id="XP_446836.1">
    <property type="nucleotide sequence ID" value="XM_446836.1"/>
</dbReference>
<dbReference type="SMR" id="Q6FSF8"/>
<dbReference type="FunCoup" id="Q6FSF8">
    <property type="interactions" value="493"/>
</dbReference>
<dbReference type="STRING" id="284593.Q6FSF8"/>
<dbReference type="GlyCosmos" id="Q6FSF8">
    <property type="glycosylation" value="1 site, No reported glycans"/>
</dbReference>
<dbReference type="EnsemblFungi" id="CAGL0H00847g-T">
    <property type="protein sequence ID" value="CAGL0H00847g-T-p1"/>
    <property type="gene ID" value="CAGL0H00847g"/>
</dbReference>
<dbReference type="KEGG" id="cgr:2888648"/>
<dbReference type="CGD" id="CAL0130036">
    <property type="gene designation" value="CAGL0H00847g"/>
</dbReference>
<dbReference type="VEuPathDB" id="FungiDB:CAGL0H00847g"/>
<dbReference type="eggNOG" id="KOG1581">
    <property type="taxonomic scope" value="Eukaryota"/>
</dbReference>
<dbReference type="HOGENOM" id="CLU_036019_0_2_1"/>
<dbReference type="InParanoid" id="Q6FSF8"/>
<dbReference type="OMA" id="CGAIGQV"/>
<dbReference type="Proteomes" id="UP000002428">
    <property type="component" value="Chromosome H"/>
</dbReference>
<dbReference type="GO" id="GO:0005789">
    <property type="term" value="C:endoplasmic reticulum membrane"/>
    <property type="evidence" value="ECO:0007669"/>
    <property type="project" value="UniProtKB-SubCell"/>
</dbReference>
<dbReference type="GO" id="GO:0000139">
    <property type="term" value="C:Golgi membrane"/>
    <property type="evidence" value="ECO:0007669"/>
    <property type="project" value="TreeGrafter"/>
</dbReference>
<dbReference type="GO" id="GO:0005459">
    <property type="term" value="F:UDP-galactose transmembrane transporter activity"/>
    <property type="evidence" value="ECO:0007669"/>
    <property type="project" value="TreeGrafter"/>
</dbReference>
<dbReference type="GO" id="GO:0005460">
    <property type="term" value="F:UDP-glucose transmembrane transporter activity"/>
    <property type="evidence" value="ECO:0007669"/>
    <property type="project" value="TreeGrafter"/>
</dbReference>
<dbReference type="InterPro" id="IPR013657">
    <property type="entry name" value="SCL35B1-4/HUT1"/>
</dbReference>
<dbReference type="PANTHER" id="PTHR10778">
    <property type="entry name" value="SOLUTE CARRIER FAMILY 35 MEMBER B"/>
    <property type="match status" value="1"/>
</dbReference>
<dbReference type="PANTHER" id="PTHR10778:SF10">
    <property type="entry name" value="SOLUTE CARRIER FAMILY 35 MEMBER B1"/>
    <property type="match status" value="1"/>
</dbReference>
<dbReference type="Pfam" id="PF08449">
    <property type="entry name" value="UAA"/>
    <property type="match status" value="1"/>
</dbReference>
<dbReference type="SUPFAM" id="SSF103481">
    <property type="entry name" value="Multidrug resistance efflux transporter EmrE"/>
    <property type="match status" value="1"/>
</dbReference>
<comment type="function">
    <text evidence="1">May be involved in specific transport of UDP-Gal from the cytosol to the Golgi lumen. Involved in the maintenance of optimal conditions for the folding of secretory pathway proteins in the endoplasmic reticulum (By similarity).</text>
</comment>
<comment type="subcellular location">
    <subcellularLocation>
        <location evidence="1">Endoplasmic reticulum membrane</location>
        <topology evidence="1">Multi-pass membrane protein</topology>
    </subcellularLocation>
</comment>
<comment type="similarity">
    <text evidence="3">Belongs to the nucleotide-sugar transporter family. SLC35B subfamily.</text>
</comment>
<protein>
    <recommendedName>
        <fullName>UDP-galactose transporter homolog 1</fullName>
    </recommendedName>
</protein>
<name>HUT1_CANGA</name>
<keyword id="KW-0256">Endoplasmic reticulum</keyword>
<keyword id="KW-0325">Glycoprotein</keyword>
<keyword id="KW-0472">Membrane</keyword>
<keyword id="KW-1185">Reference proteome</keyword>
<keyword id="KW-0762">Sugar transport</keyword>
<keyword id="KW-0812">Transmembrane</keyword>
<keyword id="KW-1133">Transmembrane helix</keyword>
<keyword id="KW-0813">Transport</keyword>
<organism>
    <name type="scientific">Candida glabrata (strain ATCC 2001 / BCRC 20586 / JCM 3761 / NBRC 0622 / NRRL Y-65 / CBS 138)</name>
    <name type="common">Yeast</name>
    <name type="synonym">Nakaseomyces glabratus</name>
    <dbReference type="NCBI Taxonomy" id="284593"/>
    <lineage>
        <taxon>Eukaryota</taxon>
        <taxon>Fungi</taxon>
        <taxon>Dikarya</taxon>
        <taxon>Ascomycota</taxon>
        <taxon>Saccharomycotina</taxon>
        <taxon>Saccharomycetes</taxon>
        <taxon>Saccharomycetales</taxon>
        <taxon>Saccharomycetaceae</taxon>
        <taxon>Nakaseomyces</taxon>
    </lineage>
</organism>
<accession>Q6FSF8</accession>
<sequence length="362" mass="40395">MSKSNSIFPVLFCAAGIYASFLTWALVQEPLTTQVWENSHKRFQCPNVIAVVQAVAAVCVGYFYMRAKGAQRNYGAIAMVRDYAKPLALISFTQSASSPLSQYALQYVDYLTYMLAKSCKMIPVLLVHLIIYRTTISRKKSVVAVLVSIGVTIFTIGGSKGKISGSISGSNDEHFFQKASGFLLLFLSLFMDGLTNATQDKMLKNNRVQMAIQNAETQDKKQQHKVFHTLTGAHMMFALNFFVAIWNIAYLLVIDRGQICNAHAMLKKDPIIVSYLLAYALCGSLGQCFIFYTLELYGSLVLIMITVTRKMMSMLLSIIVFGKTVNATQWLGIVIVFSGITWEALDKRREKKALEAKVQKSE</sequence>
<gene>
    <name type="primary">HUT1</name>
    <name type="ordered locus">CAGL0H00847g</name>
</gene>